<keyword id="KW-1185">Reference proteome</keyword>
<keyword id="KW-0687">Ribonucleoprotein</keyword>
<keyword id="KW-0689">Ribosomal protein</keyword>
<keyword id="KW-0694">RNA-binding</keyword>
<keyword id="KW-0699">rRNA-binding</keyword>
<proteinExistence type="inferred from homology"/>
<accession>A5EXM9</accession>
<gene>
    <name evidence="1" type="primary">rplI</name>
    <name type="ordered locus">DNO_1119</name>
</gene>
<feature type="chain" id="PRO_1000014774" description="Large ribosomal subunit protein bL9">
    <location>
        <begin position="1"/>
        <end position="149"/>
    </location>
</feature>
<comment type="function">
    <text evidence="1">Binds to the 23S rRNA.</text>
</comment>
<comment type="similarity">
    <text evidence="1">Belongs to the bacterial ribosomal protein bL9 family.</text>
</comment>
<dbReference type="EMBL" id="CP000513">
    <property type="protein sequence ID" value="ABQ13890.1"/>
    <property type="molecule type" value="Genomic_DNA"/>
</dbReference>
<dbReference type="RefSeq" id="WP_012031423.1">
    <property type="nucleotide sequence ID" value="NC_009446.1"/>
</dbReference>
<dbReference type="SMR" id="A5EXM9"/>
<dbReference type="STRING" id="246195.DNO_1119"/>
<dbReference type="KEGG" id="dno:DNO_1119"/>
<dbReference type="eggNOG" id="COG0359">
    <property type="taxonomic scope" value="Bacteria"/>
</dbReference>
<dbReference type="HOGENOM" id="CLU_078938_4_1_6"/>
<dbReference type="OrthoDB" id="9788336at2"/>
<dbReference type="Proteomes" id="UP000000248">
    <property type="component" value="Chromosome"/>
</dbReference>
<dbReference type="GO" id="GO:1990904">
    <property type="term" value="C:ribonucleoprotein complex"/>
    <property type="evidence" value="ECO:0007669"/>
    <property type="project" value="UniProtKB-KW"/>
</dbReference>
<dbReference type="GO" id="GO:0005840">
    <property type="term" value="C:ribosome"/>
    <property type="evidence" value="ECO:0007669"/>
    <property type="project" value="UniProtKB-KW"/>
</dbReference>
<dbReference type="GO" id="GO:0019843">
    <property type="term" value="F:rRNA binding"/>
    <property type="evidence" value="ECO:0007669"/>
    <property type="project" value="UniProtKB-UniRule"/>
</dbReference>
<dbReference type="GO" id="GO:0003735">
    <property type="term" value="F:structural constituent of ribosome"/>
    <property type="evidence" value="ECO:0007669"/>
    <property type="project" value="InterPro"/>
</dbReference>
<dbReference type="GO" id="GO:0006412">
    <property type="term" value="P:translation"/>
    <property type="evidence" value="ECO:0007669"/>
    <property type="project" value="UniProtKB-UniRule"/>
</dbReference>
<dbReference type="Gene3D" id="3.10.430.100">
    <property type="entry name" value="Ribosomal protein L9, C-terminal domain"/>
    <property type="match status" value="1"/>
</dbReference>
<dbReference type="Gene3D" id="3.40.5.10">
    <property type="entry name" value="Ribosomal protein L9, N-terminal domain"/>
    <property type="match status" value="1"/>
</dbReference>
<dbReference type="HAMAP" id="MF_00503">
    <property type="entry name" value="Ribosomal_bL9"/>
    <property type="match status" value="1"/>
</dbReference>
<dbReference type="InterPro" id="IPR000244">
    <property type="entry name" value="Ribosomal_bL9"/>
</dbReference>
<dbReference type="InterPro" id="IPR009027">
    <property type="entry name" value="Ribosomal_bL9/RNase_H1_N"/>
</dbReference>
<dbReference type="InterPro" id="IPR020594">
    <property type="entry name" value="Ribosomal_bL9_bac/chp"/>
</dbReference>
<dbReference type="InterPro" id="IPR020069">
    <property type="entry name" value="Ribosomal_bL9_C"/>
</dbReference>
<dbReference type="InterPro" id="IPR036791">
    <property type="entry name" value="Ribosomal_bL9_C_sf"/>
</dbReference>
<dbReference type="InterPro" id="IPR020070">
    <property type="entry name" value="Ribosomal_bL9_N"/>
</dbReference>
<dbReference type="InterPro" id="IPR036935">
    <property type="entry name" value="Ribosomal_bL9_N_sf"/>
</dbReference>
<dbReference type="NCBIfam" id="TIGR00158">
    <property type="entry name" value="L9"/>
    <property type="match status" value="1"/>
</dbReference>
<dbReference type="PANTHER" id="PTHR21368">
    <property type="entry name" value="50S RIBOSOMAL PROTEIN L9"/>
    <property type="match status" value="1"/>
</dbReference>
<dbReference type="Pfam" id="PF03948">
    <property type="entry name" value="Ribosomal_L9_C"/>
    <property type="match status" value="1"/>
</dbReference>
<dbReference type="Pfam" id="PF01281">
    <property type="entry name" value="Ribosomal_L9_N"/>
    <property type="match status" value="1"/>
</dbReference>
<dbReference type="SUPFAM" id="SSF55658">
    <property type="entry name" value="L9 N-domain-like"/>
    <property type="match status" value="1"/>
</dbReference>
<dbReference type="SUPFAM" id="SSF55653">
    <property type="entry name" value="Ribosomal protein L9 C-domain"/>
    <property type="match status" value="1"/>
</dbReference>
<sequence length="149" mass="16319">MEIILLDRVHGLGSLGDKVRVKSGYARNYLIPNGKATEAIPSKIAEFEARRKELEEKQAQRLAASAQRAESLNGKILTVFAKAGDEGKLFGSVGTQQIVAAAEQQGLQLERQEVMMPHGTIRELGEYVVDLKLYGDIEAQVTVRVVVAE</sequence>
<organism>
    <name type="scientific">Dichelobacter nodosus (strain VCS1703A)</name>
    <dbReference type="NCBI Taxonomy" id="246195"/>
    <lineage>
        <taxon>Bacteria</taxon>
        <taxon>Pseudomonadati</taxon>
        <taxon>Pseudomonadota</taxon>
        <taxon>Gammaproteobacteria</taxon>
        <taxon>Cardiobacteriales</taxon>
        <taxon>Cardiobacteriaceae</taxon>
        <taxon>Dichelobacter</taxon>
    </lineage>
</organism>
<protein>
    <recommendedName>
        <fullName evidence="1">Large ribosomal subunit protein bL9</fullName>
    </recommendedName>
    <alternativeName>
        <fullName evidence="2">50S ribosomal protein L9</fullName>
    </alternativeName>
</protein>
<name>RL9_DICNV</name>
<reference key="1">
    <citation type="journal article" date="2007" name="Nat. Biotechnol.">
        <title>Genome sequence and identification of candidate vaccine antigens from the animal pathogen Dichelobacter nodosus.</title>
        <authorList>
            <person name="Myers G.S.A."/>
            <person name="Parker D."/>
            <person name="Al-Hasani K."/>
            <person name="Kennan R.M."/>
            <person name="Seemann T."/>
            <person name="Ren Q."/>
            <person name="Badger J.H."/>
            <person name="Selengut J.D."/>
            <person name="Deboy R.T."/>
            <person name="Tettelin H."/>
            <person name="Boyce J.D."/>
            <person name="McCarl V.P."/>
            <person name="Han X."/>
            <person name="Nelson W.C."/>
            <person name="Madupu R."/>
            <person name="Mohamoud Y."/>
            <person name="Holley T."/>
            <person name="Fedorova N."/>
            <person name="Khouri H."/>
            <person name="Bottomley S.P."/>
            <person name="Whittington R.J."/>
            <person name="Adler B."/>
            <person name="Songer J.G."/>
            <person name="Rood J.I."/>
            <person name="Paulsen I.T."/>
        </authorList>
    </citation>
    <scope>NUCLEOTIDE SEQUENCE [LARGE SCALE GENOMIC DNA]</scope>
    <source>
        <strain>VCS1703A</strain>
    </source>
</reference>
<evidence type="ECO:0000255" key="1">
    <source>
        <dbReference type="HAMAP-Rule" id="MF_00503"/>
    </source>
</evidence>
<evidence type="ECO:0000305" key="2"/>